<dbReference type="EMBL" id="D21821">
    <property type="protein sequence ID" value="BAA04845.1"/>
    <property type="molecule type" value="mRNA"/>
</dbReference>
<dbReference type="PIR" id="JC2214">
    <property type="entry name" value="JC2214"/>
</dbReference>
<dbReference type="SMR" id="P37384"/>
<dbReference type="GO" id="GO:0000794">
    <property type="term" value="C:condensed nuclear chromosome"/>
    <property type="evidence" value="ECO:0007669"/>
    <property type="project" value="TreeGrafter"/>
</dbReference>
<dbReference type="GO" id="GO:0005524">
    <property type="term" value="F:ATP binding"/>
    <property type="evidence" value="ECO:0007669"/>
    <property type="project" value="UniProtKB-KW"/>
</dbReference>
<dbReference type="GO" id="GO:0016887">
    <property type="term" value="F:ATP hydrolysis activity"/>
    <property type="evidence" value="ECO:0007669"/>
    <property type="project" value="InterPro"/>
</dbReference>
<dbReference type="GO" id="GO:0140664">
    <property type="term" value="F:ATP-dependent DNA damage sensor activity"/>
    <property type="evidence" value="ECO:0007669"/>
    <property type="project" value="InterPro"/>
</dbReference>
<dbReference type="GO" id="GO:0000150">
    <property type="term" value="F:DNA strand exchange activity"/>
    <property type="evidence" value="ECO:0007669"/>
    <property type="project" value="InterPro"/>
</dbReference>
<dbReference type="GO" id="GO:0003690">
    <property type="term" value="F:double-stranded DNA binding"/>
    <property type="evidence" value="ECO:0007669"/>
    <property type="project" value="TreeGrafter"/>
</dbReference>
<dbReference type="GO" id="GO:0003697">
    <property type="term" value="F:single-stranded DNA binding"/>
    <property type="evidence" value="ECO:0007669"/>
    <property type="project" value="TreeGrafter"/>
</dbReference>
<dbReference type="GO" id="GO:0070192">
    <property type="term" value="P:chromosome organization involved in meiotic cell cycle"/>
    <property type="evidence" value="ECO:0007669"/>
    <property type="project" value="TreeGrafter"/>
</dbReference>
<dbReference type="GO" id="GO:0000730">
    <property type="term" value="P:DNA recombinase assembly"/>
    <property type="evidence" value="ECO:0007669"/>
    <property type="project" value="TreeGrafter"/>
</dbReference>
<dbReference type="GO" id="GO:0042148">
    <property type="term" value="P:DNA strand invasion"/>
    <property type="evidence" value="ECO:0007669"/>
    <property type="project" value="TreeGrafter"/>
</dbReference>
<dbReference type="GO" id="GO:0006312">
    <property type="term" value="P:mitotic recombination"/>
    <property type="evidence" value="ECO:0007669"/>
    <property type="project" value="TreeGrafter"/>
</dbReference>
<dbReference type="GO" id="GO:0007131">
    <property type="term" value="P:reciprocal meiotic recombination"/>
    <property type="evidence" value="ECO:0007669"/>
    <property type="project" value="InterPro"/>
</dbReference>
<dbReference type="CDD" id="cd19514">
    <property type="entry name" value="DMC1"/>
    <property type="match status" value="1"/>
</dbReference>
<dbReference type="FunFam" id="3.40.50.300:FF:000239">
    <property type="entry name" value="Meiotic recombination protein DMC1"/>
    <property type="match status" value="1"/>
</dbReference>
<dbReference type="FunFam" id="1.10.150.20:FF:000043">
    <property type="entry name" value="Meiotic recombination protein DMC1 homolog"/>
    <property type="match status" value="1"/>
</dbReference>
<dbReference type="Gene3D" id="1.10.150.20">
    <property type="entry name" value="5' to 3' exonuclease, C-terminal subdomain"/>
    <property type="match status" value="1"/>
</dbReference>
<dbReference type="Gene3D" id="3.40.50.300">
    <property type="entry name" value="P-loop containing nucleotide triphosphate hydrolases"/>
    <property type="match status" value="1"/>
</dbReference>
<dbReference type="InterPro" id="IPR003593">
    <property type="entry name" value="AAA+_ATPase"/>
</dbReference>
<dbReference type="InterPro" id="IPR011940">
    <property type="entry name" value="Dmc1"/>
</dbReference>
<dbReference type="InterPro" id="IPR013632">
    <property type="entry name" value="DNA_recomb/repair_Rad51_C"/>
</dbReference>
<dbReference type="InterPro" id="IPR016467">
    <property type="entry name" value="DNA_recomb/repair_RecA-like"/>
</dbReference>
<dbReference type="InterPro" id="IPR010995">
    <property type="entry name" value="DNA_repair_Rad51/TF_NusA_a-hlx"/>
</dbReference>
<dbReference type="InterPro" id="IPR027417">
    <property type="entry name" value="P-loop_NTPase"/>
</dbReference>
<dbReference type="InterPro" id="IPR020588">
    <property type="entry name" value="RecA_ATP-bd"/>
</dbReference>
<dbReference type="InterPro" id="IPR020587">
    <property type="entry name" value="RecA_monomer-monomer_interface"/>
</dbReference>
<dbReference type="NCBIfam" id="NF003301">
    <property type="entry name" value="PRK04301.1"/>
    <property type="match status" value="1"/>
</dbReference>
<dbReference type="NCBIfam" id="TIGR02238">
    <property type="entry name" value="recomb_DMC1"/>
    <property type="match status" value="1"/>
</dbReference>
<dbReference type="PANTHER" id="PTHR22942:SF30">
    <property type="entry name" value="MEIOTIC RECOMBINATION PROTEIN DMC1_LIM15 HOMOLOG"/>
    <property type="match status" value="1"/>
</dbReference>
<dbReference type="PANTHER" id="PTHR22942">
    <property type="entry name" value="RECA/RAD51/RADA DNA STRAND-PAIRING FAMILY MEMBER"/>
    <property type="match status" value="1"/>
</dbReference>
<dbReference type="Pfam" id="PF08423">
    <property type="entry name" value="Rad51"/>
    <property type="match status" value="1"/>
</dbReference>
<dbReference type="PIRSF" id="PIRSF005856">
    <property type="entry name" value="Rad51"/>
    <property type="match status" value="1"/>
</dbReference>
<dbReference type="SMART" id="SM00382">
    <property type="entry name" value="AAA"/>
    <property type="match status" value="1"/>
</dbReference>
<dbReference type="SUPFAM" id="SSF52540">
    <property type="entry name" value="P-loop containing nucleoside triphosphate hydrolases"/>
    <property type="match status" value="1"/>
</dbReference>
<dbReference type="SUPFAM" id="SSF47794">
    <property type="entry name" value="Rad51 N-terminal domain-like"/>
    <property type="match status" value="1"/>
</dbReference>
<dbReference type="PROSITE" id="PS50162">
    <property type="entry name" value="RECA_2"/>
    <property type="match status" value="1"/>
</dbReference>
<dbReference type="PROSITE" id="PS50163">
    <property type="entry name" value="RECA_3"/>
    <property type="match status" value="1"/>
</dbReference>
<comment type="function">
    <text>May participate in meiotic recombination.</text>
</comment>
<comment type="subunit">
    <text evidence="1">Double stacked ring-shaped homooctamer.</text>
</comment>
<comment type="subcellular location">
    <subcellularLocation>
        <location evidence="4">Nucleus</location>
    </subcellularLocation>
</comment>
<comment type="similarity">
    <text evidence="4">Belongs to the RecA family. DMC1 subfamily.</text>
</comment>
<sequence>MVDVKFEERRFESPGQLQLLDRQEAEEEEEDCFESIDKLISQGINAGDVKKLQDAGIYTCNGLMMHTKKNLTGIKGLSEAKVDKICEAAEKLVNVGYITGSDVLLKRKSVIRITTGSQALDELLGGGIETLQITEAFGEFRSGKTQIAHTLCVSTQLPVSMHGGNGKVAYIDTEGTFRPDRIVPIAERFGMDASAVLDNIIYARAYTYEHQYNLLLALAAKMSEEPFRLLIVDSVIALFRVDFSGRGELAERQQKLAQMLSRLTKIAEEFNVAVYMTNQVIADPGGGMFISDPKKPAGGHVLAHAATVRLMLRKGKGEQRVCKIFDAPNLPESEAVFQITPGGVADAKD</sequence>
<accession>P37384</accession>
<name>DMC1_LILLO</name>
<protein>
    <recommendedName>
        <fullName>Meiotic recombination protein DMC1 homolog</fullName>
    </recommendedName>
</protein>
<organism>
    <name type="scientific">Lilium longiflorum</name>
    <name type="common">Trumpet lily</name>
    <dbReference type="NCBI Taxonomy" id="4690"/>
    <lineage>
        <taxon>Eukaryota</taxon>
        <taxon>Viridiplantae</taxon>
        <taxon>Streptophyta</taxon>
        <taxon>Embryophyta</taxon>
        <taxon>Tracheophyta</taxon>
        <taxon>Spermatophyta</taxon>
        <taxon>Magnoliopsida</taxon>
        <taxon>Liliopsida</taxon>
        <taxon>Liliales</taxon>
        <taxon>Liliaceae</taxon>
        <taxon>Lilium</taxon>
    </lineage>
</organism>
<reference key="1">
    <citation type="journal article" date="1994" name="DNA Res.">
        <title>Characterization of cDNAs induced in meiotic prophase in lily microsporocytes.</title>
        <authorList>
            <person name="Kobayashi T."/>
            <person name="Kobayashi E."/>
            <person name="Sato S."/>
            <person name="Hotta Y."/>
            <person name="Miyajima N."/>
            <person name="Tanaka A."/>
            <person name="Tabata S."/>
        </authorList>
    </citation>
    <scope>NUCLEOTIDE SEQUENCE [MRNA]</scope>
    <source>
        <tissue>Flower bud</tissue>
    </source>
</reference>
<keyword id="KW-0067">ATP-binding</keyword>
<keyword id="KW-0131">Cell cycle</keyword>
<keyword id="KW-0238">DNA-binding</keyword>
<keyword id="KW-0469">Meiosis</keyword>
<keyword id="KW-0547">Nucleotide-binding</keyword>
<keyword id="KW-0539">Nucleus</keyword>
<gene>
    <name type="primary">LIM15</name>
</gene>
<feature type="chain" id="PRO_0000122921" description="Meiotic recombination protein DMC1 homolog">
    <location>
        <begin position="1"/>
        <end position="349"/>
    </location>
</feature>
<feature type="binding site" evidence="3">
    <location>
        <begin position="138"/>
        <end position="145"/>
    </location>
    <ligand>
        <name>ATP</name>
        <dbReference type="ChEBI" id="CHEBI:30616"/>
    </ligand>
</feature>
<feature type="binding site" evidence="2">
    <location>
        <position position="240"/>
    </location>
    <ligand>
        <name>dsDNA</name>
        <dbReference type="ChEBI" id="CHEBI:4705"/>
    </ligand>
</feature>
<feature type="binding site" evidence="2">
    <location>
        <position position="240"/>
    </location>
    <ligand>
        <name>ssDNA</name>
        <dbReference type="ChEBI" id="CHEBI:9160"/>
    </ligand>
</feature>
<feature type="binding site" evidence="2">
    <location>
        <position position="243"/>
    </location>
    <ligand>
        <name>ssDNA</name>
        <dbReference type="ChEBI" id="CHEBI:9160"/>
    </ligand>
</feature>
<feature type="binding site" evidence="2">
    <location>
        <position position="246"/>
    </location>
    <ligand>
        <name>dsDNA</name>
        <dbReference type="ChEBI" id="CHEBI:4705"/>
    </ligand>
</feature>
<feature type="binding site" evidence="2">
    <location>
        <position position="246"/>
    </location>
    <ligand>
        <name>ssDNA</name>
        <dbReference type="ChEBI" id="CHEBI:9160"/>
    </ligand>
</feature>
<feature type="binding site" evidence="2">
    <location>
        <position position="252"/>
    </location>
    <ligand>
        <name>dsDNA</name>
        <dbReference type="ChEBI" id="CHEBI:4705"/>
    </ligand>
</feature>
<feature type="binding site" evidence="2">
    <location>
        <position position="252"/>
    </location>
    <ligand>
        <name>ssDNA</name>
        <dbReference type="ChEBI" id="CHEBI:9160"/>
    </ligand>
</feature>
<feature type="binding site" evidence="2">
    <location>
        <position position="320"/>
    </location>
    <ligand>
        <name>ssDNA</name>
        <dbReference type="ChEBI" id="CHEBI:9160"/>
    </ligand>
</feature>
<evidence type="ECO:0000250" key="1"/>
<evidence type="ECO:0000250" key="2">
    <source>
        <dbReference type="UniProtKB" id="Q14565"/>
    </source>
</evidence>
<evidence type="ECO:0000255" key="3"/>
<evidence type="ECO:0000305" key="4"/>
<proteinExistence type="evidence at transcript level"/>